<keyword id="KW-0963">Cytoplasm</keyword>
<keyword id="KW-0274">FAD</keyword>
<keyword id="KW-0285">Flavoprotein</keyword>
<keyword id="KW-0489">Methyltransferase</keyword>
<keyword id="KW-0511">Multifunctional enzyme</keyword>
<keyword id="KW-0560">Oxidoreductase</keyword>
<keyword id="KW-0949">S-adenosyl-L-methionine</keyword>
<keyword id="KW-0808">Transferase</keyword>
<keyword id="KW-0819">tRNA processing</keyword>
<organism>
    <name type="scientific">Escherichia coli (strain ATCC 8739 / DSM 1576 / NBRC 3972 / NCIMB 8545 / WDCM 00012 / Crooks)</name>
    <dbReference type="NCBI Taxonomy" id="481805"/>
    <lineage>
        <taxon>Bacteria</taxon>
        <taxon>Pseudomonadati</taxon>
        <taxon>Pseudomonadota</taxon>
        <taxon>Gammaproteobacteria</taxon>
        <taxon>Enterobacterales</taxon>
        <taxon>Enterobacteriaceae</taxon>
        <taxon>Escherichia</taxon>
    </lineage>
</organism>
<reference key="1">
    <citation type="submission" date="2008-02" db="EMBL/GenBank/DDBJ databases">
        <title>Complete sequence of Escherichia coli C str. ATCC 8739.</title>
        <authorList>
            <person name="Copeland A."/>
            <person name="Lucas S."/>
            <person name="Lapidus A."/>
            <person name="Glavina del Rio T."/>
            <person name="Dalin E."/>
            <person name="Tice H."/>
            <person name="Bruce D."/>
            <person name="Goodwin L."/>
            <person name="Pitluck S."/>
            <person name="Kiss H."/>
            <person name="Brettin T."/>
            <person name="Detter J.C."/>
            <person name="Han C."/>
            <person name="Kuske C.R."/>
            <person name="Schmutz J."/>
            <person name="Larimer F."/>
            <person name="Land M."/>
            <person name="Hauser L."/>
            <person name="Kyrpides N."/>
            <person name="Mikhailova N."/>
            <person name="Ingram L."/>
            <person name="Richardson P."/>
        </authorList>
    </citation>
    <scope>NUCLEOTIDE SEQUENCE [LARGE SCALE GENOMIC DNA]</scope>
    <source>
        <strain>ATCC 8739 / DSM 1576 / NBRC 3972 / NCIMB 8545 / WDCM 00012 / Crooks</strain>
    </source>
</reference>
<accession>B1IXC1</accession>
<proteinExistence type="inferred from homology"/>
<protein>
    <recommendedName>
        <fullName evidence="1">tRNA 5-methylaminomethyl-2-thiouridine biosynthesis bifunctional protein MnmC</fullName>
        <shortName evidence="1">tRNA mnm(5)s(2)U biosynthesis bifunctional protein</shortName>
    </recommendedName>
    <domain>
        <recommendedName>
            <fullName evidence="1">tRNA (mnm(5)s(2)U34)-methyltransferase</fullName>
            <ecNumber evidence="1">2.1.1.61</ecNumber>
        </recommendedName>
    </domain>
    <domain>
        <recommendedName>
            <fullName evidence="1">FAD-dependent cmnm(5)s(2)U34 oxidoreductase</fullName>
            <ecNumber evidence="1">1.5.-.-</ecNumber>
        </recommendedName>
    </domain>
</protein>
<sequence length="668" mass="74476">MKHYSIQPANLEFNAEGTPVSRDFDDVYFSNDNGLEETRYVFLGGNQLEVRFPEHPHPLFVVAESGFGTGLNFLTLWQAFDQFREAHPQARLQRLHFISFEKFPLTRADLALAHQHWPELAPWAEQLQAQWPMPLPGCHRLLLDEGRVTLDLWFGDINELTSQLDDSLNQKVDAWFLDGFAPAKNPDMWTQNLFNAMARLARPGGTLATFTSAGFVRRGLQEAGFTMQKRKGFGRKREMLCGVMEQTLPLPCSAPWFNRTGSSKREAAIIGGGIASALLSLALLRRGWQVTLYCADEAPALGASGNRQGALYPLLSKHDEALNRFFSNAFTFARRFYDQLPVKFDHDWCGVTQLGWDEKSQHKIAQMLSMDLPAELAVAVEANAVEQITGVATNCSGITYPQGGWLCPAELTRNVLELAQQQGLQIYYQYQLQNLSRKDDCWLLNFAGDQQATHSVVVLANGHQISRFSQTSTLPVYSVAGQVSHIPTTPELAELKQVLCYDGYLTPQNPANQHHCIGASYHRGSEDTAYSEDDQQQNRQRLIDCFPQAQWAKEVDVSDKEARCGVRCATRDHLPMVGNVPDYEATLVEYASLAEQKDEAVSAPVFDDLFMFAALGSRGLCSAPLCAEILAAQMSDEPIPMDASTLAALNPNRLWVRKLLKGKAVKAG</sequence>
<gene>
    <name evidence="1" type="primary">mnmC</name>
    <name type="ordered locus">EcolC_1328</name>
</gene>
<feature type="chain" id="PRO_1000084793" description="tRNA 5-methylaminomethyl-2-thiouridine biosynthesis bifunctional protein MnmC">
    <location>
        <begin position="1"/>
        <end position="668"/>
    </location>
</feature>
<feature type="region of interest" description="tRNA (mnm(5)s(2)U34)-methyltransferase">
    <location>
        <begin position="1"/>
        <end position="245"/>
    </location>
</feature>
<feature type="region of interest" description="FAD-dependent cmnm(5)s(2)U34 oxidoreductase">
    <location>
        <begin position="270"/>
        <end position="668"/>
    </location>
</feature>
<evidence type="ECO:0000255" key="1">
    <source>
        <dbReference type="HAMAP-Rule" id="MF_01102"/>
    </source>
</evidence>
<dbReference type="EC" id="2.1.1.61" evidence="1"/>
<dbReference type="EC" id="1.5.-.-" evidence="1"/>
<dbReference type="EMBL" id="CP000946">
    <property type="protein sequence ID" value="ACA76994.1"/>
    <property type="molecule type" value="Genomic_DNA"/>
</dbReference>
<dbReference type="RefSeq" id="WP_000683822.1">
    <property type="nucleotide sequence ID" value="NZ_MTFT01000028.1"/>
</dbReference>
<dbReference type="SMR" id="B1IXC1"/>
<dbReference type="KEGG" id="ecl:EcolC_1328"/>
<dbReference type="HOGENOM" id="CLU_022427_1_0_6"/>
<dbReference type="GO" id="GO:0005737">
    <property type="term" value="C:cytoplasm"/>
    <property type="evidence" value="ECO:0007669"/>
    <property type="project" value="UniProtKB-SubCell"/>
</dbReference>
<dbReference type="GO" id="GO:0050660">
    <property type="term" value="F:flavin adenine dinucleotide binding"/>
    <property type="evidence" value="ECO:0007669"/>
    <property type="project" value="UniProtKB-UniRule"/>
</dbReference>
<dbReference type="GO" id="GO:0016645">
    <property type="term" value="F:oxidoreductase activity, acting on the CH-NH group of donors"/>
    <property type="evidence" value="ECO:0007669"/>
    <property type="project" value="InterPro"/>
</dbReference>
<dbReference type="GO" id="GO:0004808">
    <property type="term" value="F:tRNA (5-methylaminomethyl-2-thiouridylate)(34)-methyltransferase activity"/>
    <property type="evidence" value="ECO:0007669"/>
    <property type="project" value="UniProtKB-EC"/>
</dbReference>
<dbReference type="GO" id="GO:0032259">
    <property type="term" value="P:methylation"/>
    <property type="evidence" value="ECO:0007669"/>
    <property type="project" value="UniProtKB-KW"/>
</dbReference>
<dbReference type="GO" id="GO:0002098">
    <property type="term" value="P:tRNA wobble uridine modification"/>
    <property type="evidence" value="ECO:0007669"/>
    <property type="project" value="TreeGrafter"/>
</dbReference>
<dbReference type="FunFam" id="3.40.50.150:FF:000107">
    <property type="entry name" value="tRNA 5-methylaminomethyl-2-thiouridine biosynthesis bifunctional protein MnmC"/>
    <property type="match status" value="1"/>
</dbReference>
<dbReference type="Gene3D" id="3.30.9.10">
    <property type="entry name" value="D-Amino Acid Oxidase, subunit A, domain 2"/>
    <property type="match status" value="1"/>
</dbReference>
<dbReference type="Gene3D" id="3.50.50.60">
    <property type="entry name" value="FAD/NAD(P)-binding domain"/>
    <property type="match status" value="1"/>
</dbReference>
<dbReference type="Gene3D" id="3.40.50.150">
    <property type="entry name" value="Vaccinia Virus protein VP39"/>
    <property type="match status" value="1"/>
</dbReference>
<dbReference type="HAMAP" id="MF_01102">
    <property type="entry name" value="MnmC"/>
    <property type="match status" value="1"/>
</dbReference>
<dbReference type="InterPro" id="IPR006076">
    <property type="entry name" value="FAD-dep_OxRdtase"/>
</dbReference>
<dbReference type="InterPro" id="IPR036188">
    <property type="entry name" value="FAD/NAD-bd_sf"/>
</dbReference>
<dbReference type="InterPro" id="IPR008471">
    <property type="entry name" value="MnmC-like_methylTransf"/>
</dbReference>
<dbReference type="InterPro" id="IPR029063">
    <property type="entry name" value="SAM-dependent_MTases_sf"/>
</dbReference>
<dbReference type="InterPro" id="IPR023032">
    <property type="entry name" value="tRNA_MAMT_biosynth_bifunc_MnmC"/>
</dbReference>
<dbReference type="InterPro" id="IPR047785">
    <property type="entry name" value="tRNA_MNMC2"/>
</dbReference>
<dbReference type="InterPro" id="IPR017610">
    <property type="entry name" value="tRNA_S-uridine_synth_MnmC_C"/>
</dbReference>
<dbReference type="NCBIfam" id="TIGR03197">
    <property type="entry name" value="MnmC_Cterm"/>
    <property type="match status" value="1"/>
</dbReference>
<dbReference type="NCBIfam" id="NF002480">
    <property type="entry name" value="PRK01747.1-1"/>
    <property type="match status" value="1"/>
</dbReference>
<dbReference type="NCBIfam" id="NF002481">
    <property type="entry name" value="PRK01747.1-2"/>
    <property type="match status" value="1"/>
</dbReference>
<dbReference type="NCBIfam" id="NF002482">
    <property type="entry name" value="PRK01747.1-3"/>
    <property type="match status" value="1"/>
</dbReference>
<dbReference type="NCBIfam" id="NF002484">
    <property type="entry name" value="PRK01747.1-5"/>
    <property type="match status" value="1"/>
</dbReference>
<dbReference type="NCBIfam" id="NF033855">
    <property type="entry name" value="tRNA_MNMC2"/>
    <property type="match status" value="1"/>
</dbReference>
<dbReference type="PANTHER" id="PTHR13847">
    <property type="entry name" value="SARCOSINE DEHYDROGENASE-RELATED"/>
    <property type="match status" value="1"/>
</dbReference>
<dbReference type="PANTHER" id="PTHR13847:SF283">
    <property type="entry name" value="TRNA 5-METHYLAMINOMETHYL-2-THIOURIDINE BIOSYNTHESIS BIFUNCTIONAL PROTEIN MNMC"/>
    <property type="match status" value="1"/>
</dbReference>
<dbReference type="Pfam" id="PF01266">
    <property type="entry name" value="DAO"/>
    <property type="match status" value="1"/>
</dbReference>
<dbReference type="Pfam" id="PF05430">
    <property type="entry name" value="Methyltransf_30"/>
    <property type="match status" value="1"/>
</dbReference>
<dbReference type="SUPFAM" id="SSF51905">
    <property type="entry name" value="FAD/NAD(P)-binding domain"/>
    <property type="match status" value="1"/>
</dbReference>
<dbReference type="SUPFAM" id="SSF53335">
    <property type="entry name" value="S-adenosyl-L-methionine-dependent methyltransferases"/>
    <property type="match status" value="1"/>
</dbReference>
<name>MNMC_ECOLC</name>
<comment type="function">
    <text evidence="1">Catalyzes the last two steps in the biosynthesis of 5-methylaminomethyl-2-thiouridine (mnm(5)s(2)U) at the wobble position (U34) in tRNA. Catalyzes the FAD-dependent demodification of cmnm(5)s(2)U34 to nm(5)s(2)U34, followed by the transfer of a methyl group from S-adenosyl-L-methionine to nm(5)s(2)U34, to form mnm(5)s(2)U34.</text>
</comment>
<comment type="catalytic activity">
    <reaction evidence="1">
        <text>5-aminomethyl-2-thiouridine(34) in tRNA + S-adenosyl-L-methionine = 5-methylaminomethyl-2-thiouridine(34) in tRNA + S-adenosyl-L-homocysteine + H(+)</text>
        <dbReference type="Rhea" id="RHEA:19569"/>
        <dbReference type="Rhea" id="RHEA-COMP:10195"/>
        <dbReference type="Rhea" id="RHEA-COMP:10197"/>
        <dbReference type="ChEBI" id="CHEBI:15378"/>
        <dbReference type="ChEBI" id="CHEBI:57856"/>
        <dbReference type="ChEBI" id="CHEBI:59789"/>
        <dbReference type="ChEBI" id="CHEBI:74454"/>
        <dbReference type="ChEBI" id="CHEBI:74455"/>
        <dbReference type="EC" id="2.1.1.61"/>
    </reaction>
</comment>
<comment type="cofactor">
    <cofactor evidence="1">
        <name>FAD</name>
        <dbReference type="ChEBI" id="CHEBI:57692"/>
    </cofactor>
</comment>
<comment type="subcellular location">
    <subcellularLocation>
        <location evidence="1">Cytoplasm</location>
    </subcellularLocation>
</comment>
<comment type="similarity">
    <text evidence="1">In the N-terminal section; belongs to the methyltransferase superfamily. tRNA (mnm(5)s(2)U34)-methyltransferase family.</text>
</comment>
<comment type="similarity">
    <text evidence="1">In the C-terminal section; belongs to the DAO family.</text>
</comment>